<feature type="chain" id="PRO_0000089523" description="Uncharacterized protein C6orf118">
    <location>
        <begin position="1"/>
        <end position="469"/>
    </location>
</feature>
<feature type="region of interest" description="Disordered" evidence="2">
    <location>
        <begin position="152"/>
        <end position="174"/>
    </location>
</feature>
<feature type="coiled-coil region" evidence="1">
    <location>
        <begin position="346"/>
        <end position="375"/>
    </location>
</feature>
<feature type="coiled-coil region" evidence="1">
    <location>
        <begin position="423"/>
        <end position="453"/>
    </location>
</feature>
<feature type="compositionally biased region" description="Basic and acidic residues" evidence="2">
    <location>
        <begin position="152"/>
        <end position="161"/>
    </location>
</feature>
<feature type="sequence variant" id="VAR_050807" description="In dbSNP:rs36007498.">
    <original>R</original>
    <variation>L</variation>
    <location>
        <position position="166"/>
    </location>
</feature>
<feature type="sequence variant" id="VAR_022887" description="In dbSNP:rs510579.">
    <original>I</original>
    <variation>M</variation>
    <location>
        <position position="256"/>
    </location>
</feature>
<feature type="sequence variant" id="VAR_050808" description="In dbSNP:rs17852379." evidence="3">
    <original>G</original>
    <variation>E</variation>
    <location>
        <position position="271"/>
    </location>
</feature>
<feature type="sequence variant" id="VAR_050809" description="In dbSNP:rs540751.">
    <original>T</original>
    <variation>M</variation>
    <location>
        <position position="301"/>
    </location>
</feature>
<feature type="sequence variant" id="VAR_022888" description="In dbSNP:rs9459350.">
    <original>V</original>
    <variation>L</variation>
    <location>
        <position position="363"/>
    </location>
</feature>
<feature type="sequence variant" id="VAR_050810" description="In dbSNP:rs17856754." evidence="3">
    <original>R</original>
    <variation>Q</variation>
    <location>
        <position position="385"/>
    </location>
</feature>
<keyword id="KW-0175">Coiled coil</keyword>
<keyword id="KW-1267">Proteomics identification</keyword>
<keyword id="KW-1185">Reference proteome</keyword>
<protein>
    <recommendedName>
        <fullName>Uncharacterized protein C6orf118</fullName>
    </recommendedName>
</protein>
<name>CF118_HUMAN</name>
<gene>
    <name type="primary">C6orf118</name>
</gene>
<sequence length="469" mass="53772">MAEEREPELYLKWKHCETPGVKTLCNLKHCETPGVKTLCNLKKLLNRLQKDHREDVYLYISGHLNPNKLYQPPETILQHWPNAHRPKGERASEVGEPPAGKVARMKEALAHFTIHTALVPSEAQDTPLFRYLNPQASLSHTSEEDFLPVEAVREGKEEKKGGPPGRGPPGWRRREELRLPDLKVLCYQEAGSRGTRDRHHYVSSYLAGATSADRYRMFLRFQKEVLAKQDLLKNDFTGSKAAAGHERKLQQELQKICTCSPQQFNRLHVFGKVFEDICNSSLIFGDLLKKVKDEYELYMATLLESQPAAQYEALLAQLKALGQRPVKTADMDLAREELRMLVTATKAALEQNDRLRSELEMEVALLQSAKERSESSEKHIIDENRLTLTEKVEKKRCEILSKWDEIQALEKEIKTTLVHTGISDITENRIKSIEHEAIQLETENMILKKKIKGPLEIYQGICKIRGNRR</sequence>
<reference key="1">
    <citation type="journal article" date="2003" name="Nature">
        <title>The DNA sequence and analysis of human chromosome 6.</title>
        <authorList>
            <person name="Mungall A.J."/>
            <person name="Palmer S.A."/>
            <person name="Sims S.K."/>
            <person name="Edwards C.A."/>
            <person name="Ashurst J.L."/>
            <person name="Wilming L."/>
            <person name="Jones M.C."/>
            <person name="Horton R."/>
            <person name="Hunt S.E."/>
            <person name="Scott C.E."/>
            <person name="Gilbert J.G.R."/>
            <person name="Clamp M.E."/>
            <person name="Bethel G."/>
            <person name="Milne S."/>
            <person name="Ainscough R."/>
            <person name="Almeida J.P."/>
            <person name="Ambrose K.D."/>
            <person name="Andrews T.D."/>
            <person name="Ashwell R.I.S."/>
            <person name="Babbage A.K."/>
            <person name="Bagguley C.L."/>
            <person name="Bailey J."/>
            <person name="Banerjee R."/>
            <person name="Barker D.J."/>
            <person name="Barlow K.F."/>
            <person name="Bates K."/>
            <person name="Beare D.M."/>
            <person name="Beasley H."/>
            <person name="Beasley O."/>
            <person name="Bird C.P."/>
            <person name="Blakey S.E."/>
            <person name="Bray-Allen S."/>
            <person name="Brook J."/>
            <person name="Brown A.J."/>
            <person name="Brown J.Y."/>
            <person name="Burford D.C."/>
            <person name="Burrill W."/>
            <person name="Burton J."/>
            <person name="Carder C."/>
            <person name="Carter N.P."/>
            <person name="Chapman J.C."/>
            <person name="Clark S.Y."/>
            <person name="Clark G."/>
            <person name="Clee C.M."/>
            <person name="Clegg S."/>
            <person name="Cobley V."/>
            <person name="Collier R.E."/>
            <person name="Collins J.E."/>
            <person name="Colman L.K."/>
            <person name="Corby N.R."/>
            <person name="Coville G.J."/>
            <person name="Culley K.M."/>
            <person name="Dhami P."/>
            <person name="Davies J."/>
            <person name="Dunn M."/>
            <person name="Earthrowl M.E."/>
            <person name="Ellington A.E."/>
            <person name="Evans K.A."/>
            <person name="Faulkner L."/>
            <person name="Francis M.D."/>
            <person name="Frankish A."/>
            <person name="Frankland J."/>
            <person name="French L."/>
            <person name="Garner P."/>
            <person name="Garnett J."/>
            <person name="Ghori M.J."/>
            <person name="Gilby L.M."/>
            <person name="Gillson C.J."/>
            <person name="Glithero R.J."/>
            <person name="Grafham D.V."/>
            <person name="Grant M."/>
            <person name="Gribble S."/>
            <person name="Griffiths C."/>
            <person name="Griffiths M.N.D."/>
            <person name="Hall R."/>
            <person name="Halls K.S."/>
            <person name="Hammond S."/>
            <person name="Harley J.L."/>
            <person name="Hart E.A."/>
            <person name="Heath P.D."/>
            <person name="Heathcott R."/>
            <person name="Holmes S.J."/>
            <person name="Howden P.J."/>
            <person name="Howe K.L."/>
            <person name="Howell G.R."/>
            <person name="Huckle E."/>
            <person name="Humphray S.J."/>
            <person name="Humphries M.D."/>
            <person name="Hunt A.R."/>
            <person name="Johnson C.M."/>
            <person name="Joy A.A."/>
            <person name="Kay M."/>
            <person name="Keenan S.J."/>
            <person name="Kimberley A.M."/>
            <person name="King A."/>
            <person name="Laird G.K."/>
            <person name="Langford C."/>
            <person name="Lawlor S."/>
            <person name="Leongamornlert D.A."/>
            <person name="Leversha M."/>
            <person name="Lloyd C.R."/>
            <person name="Lloyd D.M."/>
            <person name="Loveland J.E."/>
            <person name="Lovell J."/>
            <person name="Martin S."/>
            <person name="Mashreghi-Mohammadi M."/>
            <person name="Maslen G.L."/>
            <person name="Matthews L."/>
            <person name="McCann O.T."/>
            <person name="McLaren S.J."/>
            <person name="McLay K."/>
            <person name="McMurray A."/>
            <person name="Moore M.J.F."/>
            <person name="Mullikin J.C."/>
            <person name="Niblett D."/>
            <person name="Nickerson T."/>
            <person name="Novik K.L."/>
            <person name="Oliver K."/>
            <person name="Overton-Larty E.K."/>
            <person name="Parker A."/>
            <person name="Patel R."/>
            <person name="Pearce A.V."/>
            <person name="Peck A.I."/>
            <person name="Phillimore B.J.C.T."/>
            <person name="Phillips S."/>
            <person name="Plumb R.W."/>
            <person name="Porter K.M."/>
            <person name="Ramsey Y."/>
            <person name="Ranby S.A."/>
            <person name="Rice C.M."/>
            <person name="Ross M.T."/>
            <person name="Searle S.M."/>
            <person name="Sehra H.K."/>
            <person name="Sheridan E."/>
            <person name="Skuce C.D."/>
            <person name="Smith S."/>
            <person name="Smith M."/>
            <person name="Spraggon L."/>
            <person name="Squares S.L."/>
            <person name="Steward C.A."/>
            <person name="Sycamore N."/>
            <person name="Tamlyn-Hall G."/>
            <person name="Tester J."/>
            <person name="Theaker A.J."/>
            <person name="Thomas D.W."/>
            <person name="Thorpe A."/>
            <person name="Tracey A."/>
            <person name="Tromans A."/>
            <person name="Tubby B."/>
            <person name="Wall M."/>
            <person name="Wallis J.M."/>
            <person name="West A.P."/>
            <person name="White S.S."/>
            <person name="Whitehead S.L."/>
            <person name="Whittaker H."/>
            <person name="Wild A."/>
            <person name="Willey D.J."/>
            <person name="Wilmer T.E."/>
            <person name="Wood J.M."/>
            <person name="Wray P.W."/>
            <person name="Wyatt J.C."/>
            <person name="Young L."/>
            <person name="Younger R.M."/>
            <person name="Bentley D.R."/>
            <person name="Coulson A."/>
            <person name="Durbin R.M."/>
            <person name="Hubbard T."/>
            <person name="Sulston J.E."/>
            <person name="Dunham I."/>
            <person name="Rogers J."/>
            <person name="Beck S."/>
        </authorList>
    </citation>
    <scope>NUCLEOTIDE SEQUENCE [LARGE SCALE GENOMIC DNA]</scope>
</reference>
<reference key="2">
    <citation type="journal article" date="2004" name="Genome Res.">
        <title>The status, quality, and expansion of the NIH full-length cDNA project: the Mammalian Gene Collection (MGC).</title>
        <authorList>
            <consortium name="The MGC Project Team"/>
        </authorList>
    </citation>
    <scope>NUCLEOTIDE SEQUENCE [LARGE SCALE MRNA]</scope>
    <scope>VARIANTS GLU-271 AND GLN-385</scope>
    <source>
        <tissue>Lung</tissue>
    </source>
</reference>
<proteinExistence type="evidence at protein level"/>
<organism>
    <name type="scientific">Homo sapiens</name>
    <name type="common">Human</name>
    <dbReference type="NCBI Taxonomy" id="9606"/>
    <lineage>
        <taxon>Eukaryota</taxon>
        <taxon>Metazoa</taxon>
        <taxon>Chordata</taxon>
        <taxon>Craniata</taxon>
        <taxon>Vertebrata</taxon>
        <taxon>Euteleostomi</taxon>
        <taxon>Mammalia</taxon>
        <taxon>Eutheria</taxon>
        <taxon>Euarchontoglires</taxon>
        <taxon>Primates</taxon>
        <taxon>Haplorrhini</taxon>
        <taxon>Catarrhini</taxon>
        <taxon>Hominidae</taxon>
        <taxon>Homo</taxon>
    </lineage>
</organism>
<accession>Q5T5N4</accession>
<accession>Q8TC11</accession>
<dbReference type="EMBL" id="AL356125">
    <property type="status" value="NOT_ANNOTATED_CDS"/>
    <property type="molecule type" value="Genomic_DNA"/>
</dbReference>
<dbReference type="EMBL" id="AL117345">
    <property type="status" value="NOT_ANNOTATED_CDS"/>
    <property type="molecule type" value="Genomic_DNA"/>
</dbReference>
<dbReference type="EMBL" id="BC026278">
    <property type="protein sequence ID" value="AAH26278.1"/>
    <property type="molecule type" value="mRNA"/>
</dbReference>
<dbReference type="CCDS" id="CCDS5288.1"/>
<dbReference type="RefSeq" id="NP_659417.2">
    <property type="nucleotide sequence ID" value="NM_144980.4"/>
</dbReference>
<dbReference type="SMR" id="Q5T5N4"/>
<dbReference type="BioGRID" id="127954">
    <property type="interactions" value="11"/>
</dbReference>
<dbReference type="FunCoup" id="Q5T5N4">
    <property type="interactions" value="5"/>
</dbReference>
<dbReference type="IntAct" id="Q5T5N4">
    <property type="interactions" value="4"/>
</dbReference>
<dbReference type="STRING" id="9606.ENSP00000230301"/>
<dbReference type="iPTMnet" id="Q5T5N4"/>
<dbReference type="PhosphoSitePlus" id="Q5T5N4"/>
<dbReference type="BioMuta" id="C6orf118"/>
<dbReference type="DMDM" id="71152375"/>
<dbReference type="jPOST" id="Q5T5N4"/>
<dbReference type="MassIVE" id="Q5T5N4"/>
<dbReference type="PaxDb" id="9606-ENSP00000230301"/>
<dbReference type="PeptideAtlas" id="Q5T5N4"/>
<dbReference type="Antibodypedia" id="33511">
    <property type="antibodies" value="18 antibodies from 7 providers"/>
</dbReference>
<dbReference type="DNASU" id="168090"/>
<dbReference type="Ensembl" id="ENST00000230301.9">
    <property type="protein sequence ID" value="ENSP00000230301.8"/>
    <property type="gene ID" value="ENSG00000112539.15"/>
</dbReference>
<dbReference type="GeneID" id="168090"/>
<dbReference type="KEGG" id="hsa:168090"/>
<dbReference type="MANE-Select" id="ENST00000230301.9">
    <property type="protein sequence ID" value="ENSP00000230301.8"/>
    <property type="RefSeq nucleotide sequence ID" value="NM_144980.4"/>
    <property type="RefSeq protein sequence ID" value="NP_659417.2"/>
</dbReference>
<dbReference type="UCSC" id="uc003qum.5">
    <property type="organism name" value="human"/>
</dbReference>
<dbReference type="AGR" id="HGNC:21233"/>
<dbReference type="CTD" id="168090"/>
<dbReference type="DisGeNET" id="168090"/>
<dbReference type="GeneCards" id="C6orf118"/>
<dbReference type="HGNC" id="HGNC:21233">
    <property type="gene designation" value="C6orf118"/>
</dbReference>
<dbReference type="HPA" id="ENSG00000112539">
    <property type="expression patterns" value="Group enriched (choroid plexus, fallopian tube, testis)"/>
</dbReference>
<dbReference type="neXtProt" id="NX_Q5T5N4"/>
<dbReference type="OpenTargets" id="ENSG00000112539"/>
<dbReference type="PharmGKB" id="PA134954942"/>
<dbReference type="VEuPathDB" id="HostDB:ENSG00000112539"/>
<dbReference type="eggNOG" id="ENOG502RB3J">
    <property type="taxonomic scope" value="Eukaryota"/>
</dbReference>
<dbReference type="GeneTree" id="ENSGT00390000009877"/>
<dbReference type="HOGENOM" id="CLU_040125_0_0_1"/>
<dbReference type="InParanoid" id="Q5T5N4"/>
<dbReference type="OMA" id="QEGLWKF"/>
<dbReference type="OrthoDB" id="10024479at2759"/>
<dbReference type="PAN-GO" id="Q5T5N4">
    <property type="GO annotations" value="0 GO annotations based on evolutionary models"/>
</dbReference>
<dbReference type="PhylomeDB" id="Q5T5N4"/>
<dbReference type="TreeFam" id="TF329261"/>
<dbReference type="PathwayCommons" id="Q5T5N4"/>
<dbReference type="SignaLink" id="Q5T5N4"/>
<dbReference type="BioGRID-ORCS" id="168090">
    <property type="hits" value="13 hits in 1114 CRISPR screens"/>
</dbReference>
<dbReference type="ChiTaRS" id="C6orf118">
    <property type="organism name" value="human"/>
</dbReference>
<dbReference type="GenomeRNAi" id="168090"/>
<dbReference type="Pharos" id="Q5T5N4">
    <property type="development level" value="Tdark"/>
</dbReference>
<dbReference type="PRO" id="PR:Q5T5N4"/>
<dbReference type="Proteomes" id="UP000005640">
    <property type="component" value="Chromosome 6"/>
</dbReference>
<dbReference type="RNAct" id="Q5T5N4">
    <property type="molecule type" value="protein"/>
</dbReference>
<dbReference type="Bgee" id="ENSG00000112539">
    <property type="expression patterns" value="Expressed in right uterine tube and 93 other cell types or tissues"/>
</dbReference>
<dbReference type="InterPro" id="IPR032755">
    <property type="entry name" value="TSNAXIP1_N"/>
</dbReference>
<dbReference type="PANTHER" id="PTHR34916">
    <property type="entry name" value="GI:13385330"/>
    <property type="match status" value="1"/>
</dbReference>
<dbReference type="PANTHER" id="PTHR34916:SF1">
    <property type="entry name" value="GI:13385330"/>
    <property type="match status" value="1"/>
</dbReference>
<dbReference type="Pfam" id="PF15739">
    <property type="entry name" value="TSNAXIP1_N"/>
    <property type="match status" value="1"/>
</dbReference>
<evidence type="ECO:0000255" key="1"/>
<evidence type="ECO:0000256" key="2">
    <source>
        <dbReference type="SAM" id="MobiDB-lite"/>
    </source>
</evidence>
<evidence type="ECO:0000269" key="3">
    <source>
    </source>
</evidence>